<sequence length="151" mass="16156">MKKIDVKILDPRVGKEFPLPTYATSGSAGLDLRACLDDAVELAPGDTTLVPTGLAIHIADPSLAAMMLPRSGLGHKHGIVLGNLVGLIDSDYQGQLMISVWNRGQDSFTIQPGERIAQMIFVPVVQAEFNLVEDFDATDRGEGGFGHSGRQ</sequence>
<reference key="1">
    <citation type="journal article" date="2008" name="J. Bacteriol.">
        <title>The pangenome structure of Escherichia coli: comparative genomic analysis of E. coli commensal and pathogenic isolates.</title>
        <authorList>
            <person name="Rasko D.A."/>
            <person name="Rosovitz M.J."/>
            <person name="Myers G.S.A."/>
            <person name="Mongodin E.F."/>
            <person name="Fricke W.F."/>
            <person name="Gajer P."/>
            <person name="Crabtree J."/>
            <person name="Sebaihia M."/>
            <person name="Thomson N.R."/>
            <person name="Chaudhuri R."/>
            <person name="Henderson I.R."/>
            <person name="Sperandio V."/>
            <person name="Ravel J."/>
        </authorList>
    </citation>
    <scope>NUCLEOTIDE SEQUENCE [LARGE SCALE GENOMIC DNA]</scope>
    <source>
        <strain>HS</strain>
    </source>
</reference>
<proteinExistence type="inferred from homology"/>
<accession>A8A6A2</accession>
<keyword id="KW-0378">Hydrolase</keyword>
<keyword id="KW-0460">Magnesium</keyword>
<keyword id="KW-0479">Metal-binding</keyword>
<keyword id="KW-0546">Nucleotide metabolism</keyword>
<dbReference type="EC" id="3.6.1.23" evidence="1"/>
<dbReference type="EMBL" id="CP000802">
    <property type="protein sequence ID" value="ABV08056.1"/>
    <property type="molecule type" value="Genomic_DNA"/>
</dbReference>
<dbReference type="SMR" id="A8A6A2"/>
<dbReference type="KEGG" id="ecx:EcHS_A3849"/>
<dbReference type="HOGENOM" id="CLU_068508_1_1_6"/>
<dbReference type="UniPathway" id="UPA00610">
    <property type="reaction ID" value="UER00666"/>
</dbReference>
<dbReference type="GO" id="GO:0004170">
    <property type="term" value="F:dUTP diphosphatase activity"/>
    <property type="evidence" value="ECO:0007669"/>
    <property type="project" value="UniProtKB-UniRule"/>
</dbReference>
<dbReference type="GO" id="GO:0000287">
    <property type="term" value="F:magnesium ion binding"/>
    <property type="evidence" value="ECO:0007669"/>
    <property type="project" value="UniProtKB-UniRule"/>
</dbReference>
<dbReference type="GO" id="GO:0006226">
    <property type="term" value="P:dUMP biosynthetic process"/>
    <property type="evidence" value="ECO:0007669"/>
    <property type="project" value="UniProtKB-UniRule"/>
</dbReference>
<dbReference type="GO" id="GO:0046081">
    <property type="term" value="P:dUTP catabolic process"/>
    <property type="evidence" value="ECO:0007669"/>
    <property type="project" value="InterPro"/>
</dbReference>
<dbReference type="CDD" id="cd07557">
    <property type="entry name" value="trimeric_dUTPase"/>
    <property type="match status" value="1"/>
</dbReference>
<dbReference type="FunFam" id="2.70.40.10:FF:000002">
    <property type="entry name" value="dUTP diphosphatase"/>
    <property type="match status" value="1"/>
</dbReference>
<dbReference type="Gene3D" id="2.70.40.10">
    <property type="match status" value="1"/>
</dbReference>
<dbReference type="HAMAP" id="MF_00116">
    <property type="entry name" value="dUTPase_bact"/>
    <property type="match status" value="1"/>
</dbReference>
<dbReference type="InterPro" id="IPR008181">
    <property type="entry name" value="dUTPase"/>
</dbReference>
<dbReference type="InterPro" id="IPR029054">
    <property type="entry name" value="dUTPase-like"/>
</dbReference>
<dbReference type="InterPro" id="IPR036157">
    <property type="entry name" value="dUTPase-like_sf"/>
</dbReference>
<dbReference type="InterPro" id="IPR033704">
    <property type="entry name" value="dUTPase_trimeric"/>
</dbReference>
<dbReference type="NCBIfam" id="TIGR00576">
    <property type="entry name" value="dut"/>
    <property type="match status" value="1"/>
</dbReference>
<dbReference type="NCBIfam" id="NF001862">
    <property type="entry name" value="PRK00601.1"/>
    <property type="match status" value="1"/>
</dbReference>
<dbReference type="PANTHER" id="PTHR11241">
    <property type="entry name" value="DEOXYURIDINE 5'-TRIPHOSPHATE NUCLEOTIDOHYDROLASE"/>
    <property type="match status" value="1"/>
</dbReference>
<dbReference type="PANTHER" id="PTHR11241:SF0">
    <property type="entry name" value="DEOXYURIDINE 5'-TRIPHOSPHATE NUCLEOTIDOHYDROLASE"/>
    <property type="match status" value="1"/>
</dbReference>
<dbReference type="Pfam" id="PF00692">
    <property type="entry name" value="dUTPase"/>
    <property type="match status" value="1"/>
</dbReference>
<dbReference type="SUPFAM" id="SSF51283">
    <property type="entry name" value="dUTPase-like"/>
    <property type="match status" value="1"/>
</dbReference>
<name>DUT_ECOHS</name>
<gene>
    <name evidence="1" type="primary">dut</name>
    <name type="ordered locus">EcHS_A3849</name>
</gene>
<evidence type="ECO:0000255" key="1">
    <source>
        <dbReference type="HAMAP-Rule" id="MF_00116"/>
    </source>
</evidence>
<organism>
    <name type="scientific">Escherichia coli O9:H4 (strain HS)</name>
    <dbReference type="NCBI Taxonomy" id="331112"/>
    <lineage>
        <taxon>Bacteria</taxon>
        <taxon>Pseudomonadati</taxon>
        <taxon>Pseudomonadota</taxon>
        <taxon>Gammaproteobacteria</taxon>
        <taxon>Enterobacterales</taxon>
        <taxon>Enterobacteriaceae</taxon>
        <taxon>Escherichia</taxon>
    </lineage>
</organism>
<protein>
    <recommendedName>
        <fullName evidence="1">Deoxyuridine 5'-triphosphate nucleotidohydrolase</fullName>
        <shortName evidence="1">dUTPase</shortName>
        <ecNumber evidence="1">3.6.1.23</ecNumber>
    </recommendedName>
    <alternativeName>
        <fullName evidence="1">dUTP pyrophosphatase</fullName>
    </alternativeName>
</protein>
<comment type="function">
    <text evidence="1">This enzyme is involved in nucleotide metabolism: it produces dUMP, the immediate precursor of thymidine nucleotides and it decreases the intracellular concentration of dUTP so that uracil cannot be incorporated into DNA.</text>
</comment>
<comment type="catalytic activity">
    <reaction evidence="1">
        <text>dUTP + H2O = dUMP + diphosphate + H(+)</text>
        <dbReference type="Rhea" id="RHEA:10248"/>
        <dbReference type="ChEBI" id="CHEBI:15377"/>
        <dbReference type="ChEBI" id="CHEBI:15378"/>
        <dbReference type="ChEBI" id="CHEBI:33019"/>
        <dbReference type="ChEBI" id="CHEBI:61555"/>
        <dbReference type="ChEBI" id="CHEBI:246422"/>
        <dbReference type="EC" id="3.6.1.23"/>
    </reaction>
</comment>
<comment type="cofactor">
    <cofactor evidence="1">
        <name>Mg(2+)</name>
        <dbReference type="ChEBI" id="CHEBI:18420"/>
    </cofactor>
</comment>
<comment type="pathway">
    <text evidence="1">Pyrimidine metabolism; dUMP biosynthesis; dUMP from dCTP (dUTP route): step 2/2.</text>
</comment>
<comment type="subunit">
    <text evidence="1">Homotrimer.</text>
</comment>
<comment type="similarity">
    <text evidence="1">Belongs to the dUTPase family.</text>
</comment>
<feature type="chain" id="PRO_1000057768" description="Deoxyuridine 5'-triphosphate nucleotidohydrolase">
    <location>
        <begin position="1"/>
        <end position="151"/>
    </location>
</feature>
<feature type="binding site" evidence="1">
    <location>
        <begin position="70"/>
        <end position="72"/>
    </location>
    <ligand>
        <name>substrate</name>
    </ligand>
</feature>
<feature type="binding site" evidence="1">
    <location>
        <position position="83"/>
    </location>
    <ligand>
        <name>substrate</name>
    </ligand>
</feature>
<feature type="binding site" evidence="1">
    <location>
        <begin position="87"/>
        <end position="89"/>
    </location>
    <ligand>
        <name>substrate</name>
    </ligand>
</feature>
<feature type="binding site" evidence="1">
    <location>
        <position position="97"/>
    </location>
    <ligand>
        <name>substrate</name>
    </ligand>
</feature>